<proteinExistence type="inferred from homology"/>
<name>RS5_CHLCV</name>
<keyword id="KW-0687">Ribonucleoprotein</keyword>
<keyword id="KW-0689">Ribosomal protein</keyword>
<keyword id="KW-0694">RNA-binding</keyword>
<keyword id="KW-0699">rRNA-binding</keyword>
<reference key="1">
    <citation type="journal article" date="2003" name="Nucleic Acids Res.">
        <title>Genome sequence of Chlamydophila caviae (Chlamydia psittaci GPIC): examining the role of niche-specific genes in the evolution of the Chlamydiaceae.</title>
        <authorList>
            <person name="Read T.D."/>
            <person name="Myers G.S.A."/>
            <person name="Brunham R.C."/>
            <person name="Nelson W.C."/>
            <person name="Paulsen I.T."/>
            <person name="Heidelberg J.F."/>
            <person name="Holtzapple E.K."/>
            <person name="Khouri H.M."/>
            <person name="Federova N.B."/>
            <person name="Carty H.A."/>
            <person name="Umayam L.A."/>
            <person name="Haft D.H."/>
            <person name="Peterson J.D."/>
            <person name="Beanan M.J."/>
            <person name="White O."/>
            <person name="Salzberg S.L."/>
            <person name="Hsia R.-C."/>
            <person name="McClarty G."/>
            <person name="Rank R.G."/>
            <person name="Bavoil P.M."/>
            <person name="Fraser C.M."/>
        </authorList>
    </citation>
    <scope>NUCLEOTIDE SEQUENCE [LARGE SCALE GENOMIC DNA]</scope>
    <source>
        <strain>ATCC VR-813 / DSM 19441 / 03DC25 / GPIC</strain>
    </source>
</reference>
<comment type="function">
    <text evidence="1">With S4 and S12 plays an important role in translational accuracy.</text>
</comment>
<comment type="function">
    <text evidence="1">Located at the back of the 30S subunit body where it stabilizes the conformation of the head with respect to the body.</text>
</comment>
<comment type="subunit">
    <text evidence="1">Part of the 30S ribosomal subunit. Contacts proteins S4 and S8.</text>
</comment>
<comment type="domain">
    <text>The N-terminal domain interacts with the head of the 30S subunit; the C-terminal domain interacts with the body and contacts protein S4. The interaction surface between S4 and S5 is involved in control of translational fidelity.</text>
</comment>
<comment type="similarity">
    <text evidence="1">Belongs to the universal ribosomal protein uS5 family.</text>
</comment>
<gene>
    <name evidence="1" type="primary">rpsE</name>
    <name type="ordered locus">CCA_00109</name>
</gene>
<organism>
    <name type="scientific">Chlamydia caviae (strain ATCC VR-813 / DSM 19441 / 03DC25 / GPIC)</name>
    <name type="common">Chlamydophila caviae</name>
    <dbReference type="NCBI Taxonomy" id="227941"/>
    <lineage>
        <taxon>Bacteria</taxon>
        <taxon>Pseudomonadati</taxon>
        <taxon>Chlamydiota</taxon>
        <taxon>Chlamydiia</taxon>
        <taxon>Chlamydiales</taxon>
        <taxon>Chlamydiaceae</taxon>
        <taxon>Chlamydia/Chlamydophila group</taxon>
        <taxon>Chlamydia</taxon>
    </lineage>
</organism>
<protein>
    <recommendedName>
        <fullName evidence="1">Small ribosomal subunit protein uS5</fullName>
    </recommendedName>
    <alternativeName>
        <fullName evidence="2">30S ribosomal protein S5</fullName>
    </alternativeName>
</protein>
<evidence type="ECO:0000255" key="1">
    <source>
        <dbReference type="HAMAP-Rule" id="MF_01307"/>
    </source>
</evidence>
<evidence type="ECO:0000305" key="2"/>
<sequence>MTLSKNSHKEDQLEEKVLVVNRCSKVVKGGRKFSFSALILVGDGKGRLGYGFAKANELTDAIRKGGEAARKNLITIESLESGSIPHEVLVDQDGAQLLLKPAKSGTGIVAGSRIRLILEMAGVKNIVAKSLGSNNPMNQVKAAFKALLSLSSRKDVLQRRRVTHD</sequence>
<accession>Q824N5</accession>
<dbReference type="EMBL" id="AE015925">
    <property type="protein sequence ID" value="AAP04861.1"/>
    <property type="molecule type" value="Genomic_DNA"/>
</dbReference>
<dbReference type="RefSeq" id="WP_011006082.1">
    <property type="nucleotide sequence ID" value="NC_003361.3"/>
</dbReference>
<dbReference type="SMR" id="Q824N5"/>
<dbReference type="STRING" id="227941.CCA_00109"/>
<dbReference type="KEGG" id="cca:CCA_00109"/>
<dbReference type="eggNOG" id="COG0098">
    <property type="taxonomic scope" value="Bacteria"/>
</dbReference>
<dbReference type="HOGENOM" id="CLU_065898_2_2_0"/>
<dbReference type="OrthoDB" id="9809045at2"/>
<dbReference type="Proteomes" id="UP000002193">
    <property type="component" value="Chromosome"/>
</dbReference>
<dbReference type="GO" id="GO:0015935">
    <property type="term" value="C:small ribosomal subunit"/>
    <property type="evidence" value="ECO:0007669"/>
    <property type="project" value="InterPro"/>
</dbReference>
<dbReference type="GO" id="GO:0019843">
    <property type="term" value="F:rRNA binding"/>
    <property type="evidence" value="ECO:0007669"/>
    <property type="project" value="UniProtKB-UniRule"/>
</dbReference>
<dbReference type="GO" id="GO:0003735">
    <property type="term" value="F:structural constituent of ribosome"/>
    <property type="evidence" value="ECO:0007669"/>
    <property type="project" value="InterPro"/>
</dbReference>
<dbReference type="GO" id="GO:0006412">
    <property type="term" value="P:translation"/>
    <property type="evidence" value="ECO:0007669"/>
    <property type="project" value="UniProtKB-UniRule"/>
</dbReference>
<dbReference type="FunFam" id="3.30.160.20:FF:000066">
    <property type="entry name" value="30S ribosomal protein S5"/>
    <property type="match status" value="1"/>
</dbReference>
<dbReference type="FunFam" id="3.30.230.10:FF:000002">
    <property type="entry name" value="30S ribosomal protein S5"/>
    <property type="match status" value="1"/>
</dbReference>
<dbReference type="Gene3D" id="3.30.160.20">
    <property type="match status" value="1"/>
</dbReference>
<dbReference type="Gene3D" id="3.30.230.10">
    <property type="match status" value="1"/>
</dbReference>
<dbReference type="HAMAP" id="MF_01307_B">
    <property type="entry name" value="Ribosomal_uS5_B"/>
    <property type="match status" value="1"/>
</dbReference>
<dbReference type="InterPro" id="IPR020568">
    <property type="entry name" value="Ribosomal_Su5_D2-typ_SF"/>
</dbReference>
<dbReference type="InterPro" id="IPR000851">
    <property type="entry name" value="Ribosomal_uS5"/>
</dbReference>
<dbReference type="InterPro" id="IPR005712">
    <property type="entry name" value="Ribosomal_uS5_bac-type"/>
</dbReference>
<dbReference type="InterPro" id="IPR005324">
    <property type="entry name" value="Ribosomal_uS5_C"/>
</dbReference>
<dbReference type="InterPro" id="IPR013810">
    <property type="entry name" value="Ribosomal_uS5_N"/>
</dbReference>
<dbReference type="InterPro" id="IPR018192">
    <property type="entry name" value="Ribosomal_uS5_N_CS"/>
</dbReference>
<dbReference type="InterPro" id="IPR014721">
    <property type="entry name" value="Ribsml_uS5_D2-typ_fold_subgr"/>
</dbReference>
<dbReference type="NCBIfam" id="TIGR01021">
    <property type="entry name" value="rpsE_bact"/>
    <property type="match status" value="1"/>
</dbReference>
<dbReference type="PANTHER" id="PTHR48277">
    <property type="entry name" value="MITOCHONDRIAL RIBOSOMAL PROTEIN S5"/>
    <property type="match status" value="1"/>
</dbReference>
<dbReference type="PANTHER" id="PTHR48277:SF1">
    <property type="entry name" value="MITOCHONDRIAL RIBOSOMAL PROTEIN S5"/>
    <property type="match status" value="1"/>
</dbReference>
<dbReference type="Pfam" id="PF00333">
    <property type="entry name" value="Ribosomal_S5"/>
    <property type="match status" value="1"/>
</dbReference>
<dbReference type="Pfam" id="PF03719">
    <property type="entry name" value="Ribosomal_S5_C"/>
    <property type="match status" value="1"/>
</dbReference>
<dbReference type="SUPFAM" id="SSF54768">
    <property type="entry name" value="dsRNA-binding domain-like"/>
    <property type="match status" value="1"/>
</dbReference>
<dbReference type="SUPFAM" id="SSF54211">
    <property type="entry name" value="Ribosomal protein S5 domain 2-like"/>
    <property type="match status" value="1"/>
</dbReference>
<dbReference type="PROSITE" id="PS00585">
    <property type="entry name" value="RIBOSOMAL_S5"/>
    <property type="match status" value="1"/>
</dbReference>
<dbReference type="PROSITE" id="PS50881">
    <property type="entry name" value="S5_DSRBD"/>
    <property type="match status" value="1"/>
</dbReference>
<feature type="chain" id="PRO_0000131496" description="Small ribosomal subunit protein uS5">
    <location>
        <begin position="1"/>
        <end position="165"/>
    </location>
</feature>
<feature type="domain" description="S5 DRBM" evidence="1">
    <location>
        <begin position="13"/>
        <end position="76"/>
    </location>
</feature>